<name>GPDA_STAA2</name>
<comment type="function">
    <text evidence="1">Catalyzes the reduction of the glycolytic intermediate dihydroxyacetone phosphate (DHAP) to sn-glycerol 3-phosphate (G3P), the key precursor for phospholipid synthesis.</text>
</comment>
<comment type="catalytic activity">
    <reaction evidence="1">
        <text>sn-glycerol 3-phosphate + NAD(+) = dihydroxyacetone phosphate + NADH + H(+)</text>
        <dbReference type="Rhea" id="RHEA:11092"/>
        <dbReference type="ChEBI" id="CHEBI:15378"/>
        <dbReference type="ChEBI" id="CHEBI:57540"/>
        <dbReference type="ChEBI" id="CHEBI:57597"/>
        <dbReference type="ChEBI" id="CHEBI:57642"/>
        <dbReference type="ChEBI" id="CHEBI:57945"/>
        <dbReference type="EC" id="1.1.1.94"/>
    </reaction>
    <physiologicalReaction direction="right-to-left" evidence="1">
        <dbReference type="Rhea" id="RHEA:11094"/>
    </physiologicalReaction>
</comment>
<comment type="catalytic activity">
    <reaction evidence="1">
        <text>sn-glycerol 3-phosphate + NADP(+) = dihydroxyacetone phosphate + NADPH + H(+)</text>
        <dbReference type="Rhea" id="RHEA:11096"/>
        <dbReference type="ChEBI" id="CHEBI:15378"/>
        <dbReference type="ChEBI" id="CHEBI:57597"/>
        <dbReference type="ChEBI" id="CHEBI:57642"/>
        <dbReference type="ChEBI" id="CHEBI:57783"/>
        <dbReference type="ChEBI" id="CHEBI:58349"/>
        <dbReference type="EC" id="1.1.1.94"/>
    </reaction>
    <physiologicalReaction direction="right-to-left" evidence="1">
        <dbReference type="Rhea" id="RHEA:11098"/>
    </physiologicalReaction>
</comment>
<comment type="pathway">
    <text evidence="1">Membrane lipid metabolism; glycerophospholipid metabolism.</text>
</comment>
<comment type="subcellular location">
    <subcellularLocation>
        <location evidence="1">Cytoplasm</location>
    </subcellularLocation>
</comment>
<comment type="similarity">
    <text evidence="1">Belongs to the NAD-dependent glycerol-3-phosphate dehydrogenase family.</text>
</comment>
<dbReference type="EC" id="1.1.1.94" evidence="1"/>
<dbReference type="EMBL" id="CP000736">
    <property type="protein sequence ID" value="ABR52410.1"/>
    <property type="molecule type" value="Genomic_DNA"/>
</dbReference>
<dbReference type="SMR" id="A6U1U2"/>
<dbReference type="KEGG" id="sah:SaurJH1_1561"/>
<dbReference type="HOGENOM" id="CLU_033449_0_2_9"/>
<dbReference type="UniPathway" id="UPA00940"/>
<dbReference type="GO" id="GO:0005829">
    <property type="term" value="C:cytosol"/>
    <property type="evidence" value="ECO:0007669"/>
    <property type="project" value="TreeGrafter"/>
</dbReference>
<dbReference type="GO" id="GO:0047952">
    <property type="term" value="F:glycerol-3-phosphate dehydrogenase [NAD(P)+] activity"/>
    <property type="evidence" value="ECO:0007669"/>
    <property type="project" value="UniProtKB-UniRule"/>
</dbReference>
<dbReference type="GO" id="GO:0051287">
    <property type="term" value="F:NAD binding"/>
    <property type="evidence" value="ECO:0007669"/>
    <property type="project" value="InterPro"/>
</dbReference>
<dbReference type="GO" id="GO:0005975">
    <property type="term" value="P:carbohydrate metabolic process"/>
    <property type="evidence" value="ECO:0007669"/>
    <property type="project" value="InterPro"/>
</dbReference>
<dbReference type="GO" id="GO:0046167">
    <property type="term" value="P:glycerol-3-phosphate biosynthetic process"/>
    <property type="evidence" value="ECO:0007669"/>
    <property type="project" value="UniProtKB-UniRule"/>
</dbReference>
<dbReference type="GO" id="GO:0046168">
    <property type="term" value="P:glycerol-3-phosphate catabolic process"/>
    <property type="evidence" value="ECO:0007669"/>
    <property type="project" value="InterPro"/>
</dbReference>
<dbReference type="GO" id="GO:0006650">
    <property type="term" value="P:glycerophospholipid metabolic process"/>
    <property type="evidence" value="ECO:0007669"/>
    <property type="project" value="UniProtKB-UniRule"/>
</dbReference>
<dbReference type="GO" id="GO:0008654">
    <property type="term" value="P:phospholipid biosynthetic process"/>
    <property type="evidence" value="ECO:0007669"/>
    <property type="project" value="UniProtKB-KW"/>
</dbReference>
<dbReference type="FunFam" id="1.10.1040.10:FF:000001">
    <property type="entry name" value="Glycerol-3-phosphate dehydrogenase [NAD(P)+]"/>
    <property type="match status" value="1"/>
</dbReference>
<dbReference type="FunFam" id="3.40.50.720:FF:000019">
    <property type="entry name" value="Glycerol-3-phosphate dehydrogenase [NAD(P)+]"/>
    <property type="match status" value="1"/>
</dbReference>
<dbReference type="Gene3D" id="1.10.1040.10">
    <property type="entry name" value="N-(1-d-carboxylethyl)-l-norvaline Dehydrogenase, domain 2"/>
    <property type="match status" value="1"/>
</dbReference>
<dbReference type="Gene3D" id="3.40.50.720">
    <property type="entry name" value="NAD(P)-binding Rossmann-like Domain"/>
    <property type="match status" value="1"/>
</dbReference>
<dbReference type="HAMAP" id="MF_00394">
    <property type="entry name" value="NAD_Glyc3P_dehydrog"/>
    <property type="match status" value="1"/>
</dbReference>
<dbReference type="InterPro" id="IPR008927">
    <property type="entry name" value="6-PGluconate_DH-like_C_sf"/>
</dbReference>
<dbReference type="InterPro" id="IPR013328">
    <property type="entry name" value="6PGD_dom2"/>
</dbReference>
<dbReference type="InterPro" id="IPR006168">
    <property type="entry name" value="G3P_DH_NAD-dep"/>
</dbReference>
<dbReference type="InterPro" id="IPR006109">
    <property type="entry name" value="G3P_DH_NAD-dep_C"/>
</dbReference>
<dbReference type="InterPro" id="IPR011128">
    <property type="entry name" value="G3P_DH_NAD-dep_N"/>
</dbReference>
<dbReference type="InterPro" id="IPR036291">
    <property type="entry name" value="NAD(P)-bd_dom_sf"/>
</dbReference>
<dbReference type="NCBIfam" id="NF000940">
    <property type="entry name" value="PRK00094.1-2"/>
    <property type="match status" value="1"/>
</dbReference>
<dbReference type="NCBIfam" id="NF000941">
    <property type="entry name" value="PRK00094.1-3"/>
    <property type="match status" value="1"/>
</dbReference>
<dbReference type="NCBIfam" id="NF000942">
    <property type="entry name" value="PRK00094.1-4"/>
    <property type="match status" value="1"/>
</dbReference>
<dbReference type="PANTHER" id="PTHR11728">
    <property type="entry name" value="GLYCEROL-3-PHOSPHATE DEHYDROGENASE"/>
    <property type="match status" value="1"/>
</dbReference>
<dbReference type="PANTHER" id="PTHR11728:SF1">
    <property type="entry name" value="GLYCEROL-3-PHOSPHATE DEHYDROGENASE [NAD(+)] 2, CHLOROPLASTIC"/>
    <property type="match status" value="1"/>
</dbReference>
<dbReference type="Pfam" id="PF07479">
    <property type="entry name" value="NAD_Gly3P_dh_C"/>
    <property type="match status" value="1"/>
</dbReference>
<dbReference type="Pfam" id="PF01210">
    <property type="entry name" value="NAD_Gly3P_dh_N"/>
    <property type="match status" value="1"/>
</dbReference>
<dbReference type="PIRSF" id="PIRSF000114">
    <property type="entry name" value="Glycerol-3-P_dh"/>
    <property type="match status" value="1"/>
</dbReference>
<dbReference type="PRINTS" id="PR00077">
    <property type="entry name" value="GPDHDRGNASE"/>
</dbReference>
<dbReference type="SUPFAM" id="SSF48179">
    <property type="entry name" value="6-phosphogluconate dehydrogenase C-terminal domain-like"/>
    <property type="match status" value="1"/>
</dbReference>
<dbReference type="SUPFAM" id="SSF51735">
    <property type="entry name" value="NAD(P)-binding Rossmann-fold domains"/>
    <property type="match status" value="1"/>
</dbReference>
<dbReference type="PROSITE" id="PS00957">
    <property type="entry name" value="NAD_G3PDH"/>
    <property type="match status" value="1"/>
</dbReference>
<organism>
    <name type="scientific">Staphylococcus aureus (strain JH1)</name>
    <dbReference type="NCBI Taxonomy" id="359787"/>
    <lineage>
        <taxon>Bacteria</taxon>
        <taxon>Bacillati</taxon>
        <taxon>Bacillota</taxon>
        <taxon>Bacilli</taxon>
        <taxon>Bacillales</taxon>
        <taxon>Staphylococcaceae</taxon>
        <taxon>Staphylococcus</taxon>
    </lineage>
</organism>
<reference key="1">
    <citation type="submission" date="2007-06" db="EMBL/GenBank/DDBJ databases">
        <title>Complete sequence of chromosome of Staphylococcus aureus subsp. aureus JH1.</title>
        <authorList>
            <consortium name="US DOE Joint Genome Institute"/>
            <person name="Copeland A."/>
            <person name="Lucas S."/>
            <person name="Lapidus A."/>
            <person name="Barry K."/>
            <person name="Detter J.C."/>
            <person name="Glavina del Rio T."/>
            <person name="Hammon N."/>
            <person name="Israni S."/>
            <person name="Dalin E."/>
            <person name="Tice H."/>
            <person name="Pitluck S."/>
            <person name="Chain P."/>
            <person name="Malfatti S."/>
            <person name="Shin M."/>
            <person name="Vergez L."/>
            <person name="Schmutz J."/>
            <person name="Larimer F."/>
            <person name="Land M."/>
            <person name="Hauser L."/>
            <person name="Kyrpides N."/>
            <person name="Ivanova N."/>
            <person name="Tomasz A."/>
            <person name="Richardson P."/>
        </authorList>
    </citation>
    <scope>NUCLEOTIDE SEQUENCE [LARGE SCALE GENOMIC DNA]</scope>
    <source>
        <strain>JH1</strain>
    </source>
</reference>
<keyword id="KW-0963">Cytoplasm</keyword>
<keyword id="KW-0444">Lipid biosynthesis</keyword>
<keyword id="KW-0443">Lipid metabolism</keyword>
<keyword id="KW-0520">NAD</keyword>
<keyword id="KW-0521">NADP</keyword>
<keyword id="KW-0547">Nucleotide-binding</keyword>
<keyword id="KW-0560">Oxidoreductase</keyword>
<keyword id="KW-0594">Phospholipid biosynthesis</keyword>
<keyword id="KW-1208">Phospholipid metabolism</keyword>
<feature type="chain" id="PRO_1000080320" description="Glycerol-3-phosphate dehydrogenase [NAD(P)+]">
    <location>
        <begin position="1"/>
        <end position="332"/>
    </location>
</feature>
<feature type="active site" description="Proton acceptor" evidence="1">
    <location>
        <position position="192"/>
    </location>
</feature>
<feature type="binding site" evidence="1">
    <location>
        <position position="11"/>
    </location>
    <ligand>
        <name>NADPH</name>
        <dbReference type="ChEBI" id="CHEBI:57783"/>
    </ligand>
</feature>
<feature type="binding site" evidence="1">
    <location>
        <position position="12"/>
    </location>
    <ligand>
        <name>NADPH</name>
        <dbReference type="ChEBI" id="CHEBI:57783"/>
    </ligand>
</feature>
<feature type="binding site" evidence="1">
    <location>
        <position position="32"/>
    </location>
    <ligand>
        <name>NADPH</name>
        <dbReference type="ChEBI" id="CHEBI:57783"/>
    </ligand>
</feature>
<feature type="binding site" evidence="1">
    <location>
        <position position="106"/>
    </location>
    <ligand>
        <name>NADPH</name>
        <dbReference type="ChEBI" id="CHEBI:57783"/>
    </ligand>
</feature>
<feature type="binding site" evidence="1">
    <location>
        <position position="106"/>
    </location>
    <ligand>
        <name>sn-glycerol 3-phosphate</name>
        <dbReference type="ChEBI" id="CHEBI:57597"/>
    </ligand>
</feature>
<feature type="binding site" evidence="1">
    <location>
        <position position="137"/>
    </location>
    <ligand>
        <name>sn-glycerol 3-phosphate</name>
        <dbReference type="ChEBI" id="CHEBI:57597"/>
    </ligand>
</feature>
<feature type="binding site" evidence="1">
    <location>
        <position position="139"/>
    </location>
    <ligand>
        <name>sn-glycerol 3-phosphate</name>
        <dbReference type="ChEBI" id="CHEBI:57597"/>
    </ligand>
</feature>
<feature type="binding site" evidence="1">
    <location>
        <position position="141"/>
    </location>
    <ligand>
        <name>NADPH</name>
        <dbReference type="ChEBI" id="CHEBI:57783"/>
    </ligand>
</feature>
<feature type="binding site" evidence="1">
    <location>
        <position position="192"/>
    </location>
    <ligand>
        <name>sn-glycerol 3-phosphate</name>
        <dbReference type="ChEBI" id="CHEBI:57597"/>
    </ligand>
</feature>
<feature type="binding site" evidence="1">
    <location>
        <position position="245"/>
    </location>
    <ligand>
        <name>sn-glycerol 3-phosphate</name>
        <dbReference type="ChEBI" id="CHEBI:57597"/>
    </ligand>
</feature>
<feature type="binding site" evidence="1">
    <location>
        <position position="255"/>
    </location>
    <ligand>
        <name>sn-glycerol 3-phosphate</name>
        <dbReference type="ChEBI" id="CHEBI:57597"/>
    </ligand>
</feature>
<feature type="binding site" evidence="1">
    <location>
        <position position="256"/>
    </location>
    <ligand>
        <name>NADPH</name>
        <dbReference type="ChEBI" id="CHEBI:57783"/>
    </ligand>
</feature>
<feature type="binding site" evidence="1">
    <location>
        <position position="256"/>
    </location>
    <ligand>
        <name>sn-glycerol 3-phosphate</name>
        <dbReference type="ChEBI" id="CHEBI:57597"/>
    </ligand>
</feature>
<feature type="binding site" evidence="1">
    <location>
        <position position="257"/>
    </location>
    <ligand>
        <name>sn-glycerol 3-phosphate</name>
        <dbReference type="ChEBI" id="CHEBI:57597"/>
    </ligand>
</feature>
<feature type="binding site" evidence="1">
    <location>
        <position position="280"/>
    </location>
    <ligand>
        <name>NADPH</name>
        <dbReference type="ChEBI" id="CHEBI:57783"/>
    </ligand>
</feature>
<feature type="binding site" evidence="1">
    <location>
        <position position="282"/>
    </location>
    <ligand>
        <name>NADPH</name>
        <dbReference type="ChEBI" id="CHEBI:57783"/>
    </ligand>
</feature>
<evidence type="ECO:0000255" key="1">
    <source>
        <dbReference type="HAMAP-Rule" id="MF_00394"/>
    </source>
</evidence>
<proteinExistence type="inferred from homology"/>
<sequence length="332" mass="36098">MTKITVFGMGSFGTALANVLAENGHDVLMWGKNQDAVDELNTCHTNKKYLKYAKLDVNIIATSDMTKAIQFADIYLMALPTKAMREVATQINDKLTSKKTFIHVAKGIENGTFKRVSEMIEDSISPEYNAGIGVLSGPSHAEEVVVKQPTTVAASSKDKSVSKLTQDLFMNDYLRVYTNDDLIGVELGGALKNIIAVASGIVAGIGYGDNAKAALMTRGLAEISRLGEKLGADPMTFLGLGGIGDLIVTCISTHSRNFTLGYKLGQGESMDQALSEMNMVVEGIYTTKSVYHLAKEKNVDMPITNALYRVLFENISVKECVKDLMERDKKSE</sequence>
<accession>A6U1U2</accession>
<protein>
    <recommendedName>
        <fullName evidence="1">Glycerol-3-phosphate dehydrogenase [NAD(P)+]</fullName>
        <ecNumber evidence="1">1.1.1.94</ecNumber>
    </recommendedName>
    <alternativeName>
        <fullName evidence="1">NAD(P)(+)-dependent glycerol-3-phosphate dehydrogenase</fullName>
    </alternativeName>
    <alternativeName>
        <fullName evidence="1">NAD(P)H-dependent dihydroxyacetone-phosphate reductase</fullName>
    </alternativeName>
</protein>
<gene>
    <name evidence="1" type="primary">gpsA</name>
    <name type="ordered locus">SaurJH1_1561</name>
</gene>